<comment type="function">
    <text evidence="1">Could be a nuclease involved in processing of the 5'-end of pre-16S rRNA.</text>
</comment>
<comment type="subcellular location">
    <subcellularLocation>
        <location evidence="1">Cytoplasm</location>
    </subcellularLocation>
</comment>
<comment type="similarity">
    <text evidence="1">Belongs to the YqgF nuclease family.</text>
</comment>
<reference key="1">
    <citation type="journal article" date="2002" name="Mol. Microbiol.">
        <title>Genome sequence of Streptococcus agalactiae, a pathogen causing invasive neonatal disease.</title>
        <authorList>
            <person name="Glaser P."/>
            <person name="Rusniok C."/>
            <person name="Buchrieser C."/>
            <person name="Chevalier F."/>
            <person name="Frangeul L."/>
            <person name="Msadek T."/>
            <person name="Zouine M."/>
            <person name="Couve E."/>
            <person name="Lalioui L."/>
            <person name="Poyart C."/>
            <person name="Trieu-Cuot P."/>
            <person name="Kunst F."/>
        </authorList>
    </citation>
    <scope>NUCLEOTIDE SEQUENCE [LARGE SCALE GENOMIC DNA]</scope>
    <source>
        <strain>NEM316</strain>
    </source>
</reference>
<sequence>MRIMGLDVGSKTVGVAISDPLGFTAQGLEIIKIDEESGNFGFDRLAELVKEYKVDKFVVGLPKNMNNTSGPRVEASQAYGDKITELFNLPVEYQDERLTTVQAERMLVEQADISRGKRKKVIDKLAAQLILQNYLDRMF</sequence>
<organism>
    <name type="scientific">Streptococcus agalactiae serotype III (strain NEM316)</name>
    <dbReference type="NCBI Taxonomy" id="211110"/>
    <lineage>
        <taxon>Bacteria</taxon>
        <taxon>Bacillati</taxon>
        <taxon>Bacillota</taxon>
        <taxon>Bacilli</taxon>
        <taxon>Lactobacillales</taxon>
        <taxon>Streptococcaceae</taxon>
        <taxon>Streptococcus</taxon>
    </lineage>
</organism>
<proteinExistence type="inferred from homology"/>
<name>YQGF_STRA3</name>
<evidence type="ECO:0000255" key="1">
    <source>
        <dbReference type="HAMAP-Rule" id="MF_00651"/>
    </source>
</evidence>
<protein>
    <recommendedName>
        <fullName evidence="1">Putative pre-16S rRNA nuclease</fullName>
        <ecNumber evidence="1">3.1.-.-</ecNumber>
    </recommendedName>
</protein>
<dbReference type="EC" id="3.1.-.-" evidence="1"/>
<dbReference type="EMBL" id="AL766856">
    <property type="protein sequence ID" value="CAD47703.1"/>
    <property type="molecule type" value="Genomic_DNA"/>
</dbReference>
<dbReference type="SMR" id="P67492"/>
<dbReference type="KEGG" id="san:gbs2044"/>
<dbReference type="eggNOG" id="COG0816">
    <property type="taxonomic scope" value="Bacteria"/>
</dbReference>
<dbReference type="HOGENOM" id="CLU_098240_2_0_9"/>
<dbReference type="Proteomes" id="UP000000823">
    <property type="component" value="Chromosome"/>
</dbReference>
<dbReference type="GO" id="GO:0005829">
    <property type="term" value="C:cytosol"/>
    <property type="evidence" value="ECO:0007669"/>
    <property type="project" value="TreeGrafter"/>
</dbReference>
<dbReference type="GO" id="GO:0004518">
    <property type="term" value="F:nuclease activity"/>
    <property type="evidence" value="ECO:0007669"/>
    <property type="project" value="UniProtKB-KW"/>
</dbReference>
<dbReference type="GO" id="GO:0000967">
    <property type="term" value="P:rRNA 5'-end processing"/>
    <property type="evidence" value="ECO:0007669"/>
    <property type="project" value="UniProtKB-UniRule"/>
</dbReference>
<dbReference type="CDD" id="cd16964">
    <property type="entry name" value="YqgF"/>
    <property type="match status" value="1"/>
</dbReference>
<dbReference type="FunFam" id="3.30.420.140:FF:000003">
    <property type="entry name" value="Putative pre-16S rRNA nuclease"/>
    <property type="match status" value="1"/>
</dbReference>
<dbReference type="Gene3D" id="3.30.420.140">
    <property type="entry name" value="YqgF/RNase H-like domain"/>
    <property type="match status" value="1"/>
</dbReference>
<dbReference type="HAMAP" id="MF_00651">
    <property type="entry name" value="Nuclease_YqgF"/>
    <property type="match status" value="1"/>
</dbReference>
<dbReference type="InterPro" id="IPR012337">
    <property type="entry name" value="RNaseH-like_sf"/>
</dbReference>
<dbReference type="InterPro" id="IPR005227">
    <property type="entry name" value="YqgF"/>
</dbReference>
<dbReference type="InterPro" id="IPR006641">
    <property type="entry name" value="YqgF/RNaseH-like_dom"/>
</dbReference>
<dbReference type="InterPro" id="IPR037027">
    <property type="entry name" value="YqgF/RNaseH-like_dom_sf"/>
</dbReference>
<dbReference type="NCBIfam" id="TIGR00250">
    <property type="entry name" value="RNAse_H_YqgF"/>
    <property type="match status" value="1"/>
</dbReference>
<dbReference type="PANTHER" id="PTHR33317">
    <property type="entry name" value="POLYNUCLEOTIDYL TRANSFERASE, RIBONUCLEASE H-LIKE SUPERFAMILY PROTEIN"/>
    <property type="match status" value="1"/>
</dbReference>
<dbReference type="PANTHER" id="PTHR33317:SF4">
    <property type="entry name" value="POLYNUCLEOTIDYL TRANSFERASE, RIBONUCLEASE H-LIKE SUPERFAMILY PROTEIN"/>
    <property type="match status" value="1"/>
</dbReference>
<dbReference type="Pfam" id="PF03652">
    <property type="entry name" value="RuvX"/>
    <property type="match status" value="1"/>
</dbReference>
<dbReference type="SMART" id="SM00732">
    <property type="entry name" value="YqgFc"/>
    <property type="match status" value="1"/>
</dbReference>
<dbReference type="SUPFAM" id="SSF53098">
    <property type="entry name" value="Ribonuclease H-like"/>
    <property type="match status" value="1"/>
</dbReference>
<gene>
    <name type="ordered locus">gbs2044</name>
</gene>
<feature type="chain" id="PRO_0000172145" description="Putative pre-16S rRNA nuclease">
    <location>
        <begin position="1"/>
        <end position="139"/>
    </location>
</feature>
<keyword id="KW-0963">Cytoplasm</keyword>
<keyword id="KW-0378">Hydrolase</keyword>
<keyword id="KW-0540">Nuclease</keyword>
<keyword id="KW-0690">Ribosome biogenesis</keyword>
<accession>P67492</accession>
<accession>Q8DWX1</accession>
<accession>Q8E2S3</accession>